<accession>P66423</accession>
<accession>Q9A1W1</accession>
<feature type="chain" id="PRO_0000130949" description="Small ribosomal subunit protein uS14B">
    <location>
        <begin position="1"/>
        <end position="61"/>
    </location>
</feature>
<feature type="binding site" evidence="1">
    <location>
        <position position="24"/>
    </location>
    <ligand>
        <name>Zn(2+)</name>
        <dbReference type="ChEBI" id="CHEBI:29105"/>
    </ligand>
</feature>
<feature type="binding site" evidence="1">
    <location>
        <position position="27"/>
    </location>
    <ligand>
        <name>Zn(2+)</name>
        <dbReference type="ChEBI" id="CHEBI:29105"/>
    </ligand>
</feature>
<feature type="binding site" evidence="1">
    <location>
        <position position="40"/>
    </location>
    <ligand>
        <name>Zn(2+)</name>
        <dbReference type="ChEBI" id="CHEBI:29105"/>
    </ligand>
</feature>
<feature type="binding site" evidence="1">
    <location>
        <position position="43"/>
    </location>
    <ligand>
        <name>Zn(2+)</name>
        <dbReference type="ChEBI" id="CHEBI:29105"/>
    </ligand>
</feature>
<sequence length="61" mass="7073">MAKKSMIAKNKRPAKHSTQAYTRCEKCGRPHSVYRKFKLCRVCFRELAYKGQIPGVVKASW</sequence>
<keyword id="KW-0479">Metal-binding</keyword>
<keyword id="KW-0687">Ribonucleoprotein</keyword>
<keyword id="KW-0689">Ribosomal protein</keyword>
<keyword id="KW-0694">RNA-binding</keyword>
<keyword id="KW-0699">rRNA-binding</keyword>
<keyword id="KW-0862">Zinc</keyword>
<dbReference type="EMBL" id="AE009949">
    <property type="protein sequence ID" value="AAL96889.1"/>
    <property type="molecule type" value="Genomic_DNA"/>
</dbReference>
<dbReference type="RefSeq" id="WP_002987746.1">
    <property type="nucleotide sequence ID" value="NC_003485.1"/>
</dbReference>
<dbReference type="SMR" id="P66423"/>
<dbReference type="KEGG" id="spm:spyM18_0065"/>
<dbReference type="HOGENOM" id="CLU_139869_3_0_9"/>
<dbReference type="GO" id="GO:0015935">
    <property type="term" value="C:small ribosomal subunit"/>
    <property type="evidence" value="ECO:0007669"/>
    <property type="project" value="TreeGrafter"/>
</dbReference>
<dbReference type="GO" id="GO:0019843">
    <property type="term" value="F:rRNA binding"/>
    <property type="evidence" value="ECO:0007669"/>
    <property type="project" value="UniProtKB-UniRule"/>
</dbReference>
<dbReference type="GO" id="GO:0003735">
    <property type="term" value="F:structural constituent of ribosome"/>
    <property type="evidence" value="ECO:0007669"/>
    <property type="project" value="InterPro"/>
</dbReference>
<dbReference type="GO" id="GO:0008270">
    <property type="term" value="F:zinc ion binding"/>
    <property type="evidence" value="ECO:0007669"/>
    <property type="project" value="UniProtKB-UniRule"/>
</dbReference>
<dbReference type="GO" id="GO:0006412">
    <property type="term" value="P:translation"/>
    <property type="evidence" value="ECO:0007669"/>
    <property type="project" value="UniProtKB-UniRule"/>
</dbReference>
<dbReference type="FunFam" id="4.10.830.10:FF:000001">
    <property type="entry name" value="30S ribosomal protein S14 type Z"/>
    <property type="match status" value="1"/>
</dbReference>
<dbReference type="Gene3D" id="4.10.830.10">
    <property type="entry name" value="30s Ribosomal Protein S14, Chain N"/>
    <property type="match status" value="1"/>
</dbReference>
<dbReference type="HAMAP" id="MF_01364_B">
    <property type="entry name" value="Ribosomal_uS14_2_B"/>
    <property type="match status" value="1"/>
</dbReference>
<dbReference type="InterPro" id="IPR001209">
    <property type="entry name" value="Ribosomal_uS14"/>
</dbReference>
<dbReference type="InterPro" id="IPR023053">
    <property type="entry name" value="Ribosomal_uS14_bact"/>
</dbReference>
<dbReference type="InterPro" id="IPR018271">
    <property type="entry name" value="Ribosomal_uS14_CS"/>
</dbReference>
<dbReference type="InterPro" id="IPR043140">
    <property type="entry name" value="Ribosomal_uS14_sf"/>
</dbReference>
<dbReference type="NCBIfam" id="NF005974">
    <property type="entry name" value="PRK08061.1"/>
    <property type="match status" value="1"/>
</dbReference>
<dbReference type="PANTHER" id="PTHR19836">
    <property type="entry name" value="30S RIBOSOMAL PROTEIN S14"/>
    <property type="match status" value="1"/>
</dbReference>
<dbReference type="PANTHER" id="PTHR19836:SF26">
    <property type="entry name" value="SMALL RIBOSOMAL SUBUNIT PROTEIN US14B"/>
    <property type="match status" value="1"/>
</dbReference>
<dbReference type="Pfam" id="PF00253">
    <property type="entry name" value="Ribosomal_S14"/>
    <property type="match status" value="1"/>
</dbReference>
<dbReference type="SUPFAM" id="SSF57716">
    <property type="entry name" value="Glucocorticoid receptor-like (DNA-binding domain)"/>
    <property type="match status" value="1"/>
</dbReference>
<dbReference type="PROSITE" id="PS00527">
    <property type="entry name" value="RIBOSOMAL_S14"/>
    <property type="match status" value="1"/>
</dbReference>
<name>RS14Z_STRP8</name>
<proteinExistence type="inferred from homology"/>
<evidence type="ECO:0000255" key="1">
    <source>
        <dbReference type="HAMAP-Rule" id="MF_01364"/>
    </source>
</evidence>
<evidence type="ECO:0000305" key="2"/>
<comment type="function">
    <text evidence="1">Binds 16S rRNA, required for the assembly of 30S particles and may also be responsible for determining the conformation of the 16S rRNA at the A site.</text>
</comment>
<comment type="cofactor">
    <cofactor evidence="1">
        <name>Zn(2+)</name>
        <dbReference type="ChEBI" id="CHEBI:29105"/>
    </cofactor>
    <text evidence="1">Binds 1 zinc ion per subunit.</text>
</comment>
<comment type="subunit">
    <text evidence="1">Part of the 30S ribosomal subunit. Contacts proteins S3 and S10.</text>
</comment>
<comment type="similarity">
    <text evidence="1">Belongs to the universal ribosomal protein uS14 family. Zinc-binding uS14 subfamily.</text>
</comment>
<protein>
    <recommendedName>
        <fullName evidence="1">Small ribosomal subunit protein uS14B</fullName>
    </recommendedName>
    <alternativeName>
        <fullName evidence="2">30S ribosomal protein S14 type Z</fullName>
    </alternativeName>
</protein>
<organism>
    <name type="scientific">Streptococcus pyogenes serotype M18 (strain MGAS8232)</name>
    <dbReference type="NCBI Taxonomy" id="186103"/>
    <lineage>
        <taxon>Bacteria</taxon>
        <taxon>Bacillati</taxon>
        <taxon>Bacillota</taxon>
        <taxon>Bacilli</taxon>
        <taxon>Lactobacillales</taxon>
        <taxon>Streptococcaceae</taxon>
        <taxon>Streptococcus</taxon>
    </lineage>
</organism>
<gene>
    <name evidence="1" type="primary">rpsZ</name>
    <name evidence="1" type="synonym">rpsN.1</name>
    <name evidence="1" type="synonym">rpsN1</name>
    <name type="ordered locus">spyM18_0065</name>
</gene>
<reference key="1">
    <citation type="journal article" date="2002" name="Proc. Natl. Acad. Sci. U.S.A.">
        <title>Genome sequence and comparative microarray analysis of serotype M18 group A Streptococcus strains associated with acute rheumatic fever outbreaks.</title>
        <authorList>
            <person name="Smoot J.C."/>
            <person name="Barbian K.D."/>
            <person name="Van Gompel J.J."/>
            <person name="Smoot L.M."/>
            <person name="Chaussee M.S."/>
            <person name="Sylva G.L."/>
            <person name="Sturdevant D.E."/>
            <person name="Ricklefs S.M."/>
            <person name="Porcella S.F."/>
            <person name="Parkins L.D."/>
            <person name="Beres S.B."/>
            <person name="Campbell D.S."/>
            <person name="Smith T.M."/>
            <person name="Zhang Q."/>
            <person name="Kapur V."/>
            <person name="Daly J.A."/>
            <person name="Veasy L.G."/>
            <person name="Musser J.M."/>
        </authorList>
    </citation>
    <scope>NUCLEOTIDE SEQUENCE [LARGE SCALE GENOMIC DNA]</scope>
    <source>
        <strain>MGAS8232</strain>
    </source>
</reference>